<evidence type="ECO:0000255" key="1">
    <source>
        <dbReference type="HAMAP-Rule" id="MF_00121"/>
    </source>
</evidence>
<proteinExistence type="inferred from homology"/>
<organism>
    <name type="scientific">Xanthobacter autotrophicus (strain ATCC BAA-1158 / Py2)</name>
    <dbReference type="NCBI Taxonomy" id="78245"/>
    <lineage>
        <taxon>Bacteria</taxon>
        <taxon>Pseudomonadati</taxon>
        <taxon>Pseudomonadota</taxon>
        <taxon>Alphaproteobacteria</taxon>
        <taxon>Hyphomicrobiales</taxon>
        <taxon>Xanthobacteraceae</taxon>
        <taxon>Xanthobacter</taxon>
    </lineage>
</organism>
<accession>A7IMA9</accession>
<comment type="function">
    <text evidence="1">Allows the formation of correctly charged Asn-tRNA(Asn) or Gln-tRNA(Gln) through the transamidation of misacylated Asp-tRNA(Asn) or Glu-tRNA(Gln) in organisms which lack either or both of asparaginyl-tRNA or glutaminyl-tRNA synthetases. The reaction takes place in the presence of glutamine and ATP through an activated phospho-Asp-tRNA(Asn) or phospho-Glu-tRNA(Gln).</text>
</comment>
<comment type="catalytic activity">
    <reaction evidence="1">
        <text>L-glutamyl-tRNA(Gln) + L-glutamine + ATP + H2O = L-glutaminyl-tRNA(Gln) + L-glutamate + ADP + phosphate + H(+)</text>
        <dbReference type="Rhea" id="RHEA:17521"/>
        <dbReference type="Rhea" id="RHEA-COMP:9681"/>
        <dbReference type="Rhea" id="RHEA-COMP:9684"/>
        <dbReference type="ChEBI" id="CHEBI:15377"/>
        <dbReference type="ChEBI" id="CHEBI:15378"/>
        <dbReference type="ChEBI" id="CHEBI:29985"/>
        <dbReference type="ChEBI" id="CHEBI:30616"/>
        <dbReference type="ChEBI" id="CHEBI:43474"/>
        <dbReference type="ChEBI" id="CHEBI:58359"/>
        <dbReference type="ChEBI" id="CHEBI:78520"/>
        <dbReference type="ChEBI" id="CHEBI:78521"/>
        <dbReference type="ChEBI" id="CHEBI:456216"/>
    </reaction>
</comment>
<comment type="catalytic activity">
    <reaction evidence="1">
        <text>L-aspartyl-tRNA(Asn) + L-glutamine + ATP + H2O = L-asparaginyl-tRNA(Asn) + L-glutamate + ADP + phosphate + 2 H(+)</text>
        <dbReference type="Rhea" id="RHEA:14513"/>
        <dbReference type="Rhea" id="RHEA-COMP:9674"/>
        <dbReference type="Rhea" id="RHEA-COMP:9677"/>
        <dbReference type="ChEBI" id="CHEBI:15377"/>
        <dbReference type="ChEBI" id="CHEBI:15378"/>
        <dbReference type="ChEBI" id="CHEBI:29985"/>
        <dbReference type="ChEBI" id="CHEBI:30616"/>
        <dbReference type="ChEBI" id="CHEBI:43474"/>
        <dbReference type="ChEBI" id="CHEBI:58359"/>
        <dbReference type="ChEBI" id="CHEBI:78515"/>
        <dbReference type="ChEBI" id="CHEBI:78516"/>
        <dbReference type="ChEBI" id="CHEBI:456216"/>
    </reaction>
</comment>
<comment type="subunit">
    <text evidence="1">Heterotrimer of A, B and C subunits.</text>
</comment>
<comment type="similarity">
    <text evidence="1">Belongs to the GatB/GatE family. GatB subfamily.</text>
</comment>
<keyword id="KW-0067">ATP-binding</keyword>
<keyword id="KW-0436">Ligase</keyword>
<keyword id="KW-0547">Nucleotide-binding</keyword>
<keyword id="KW-0648">Protein biosynthesis</keyword>
<keyword id="KW-1185">Reference proteome</keyword>
<reference key="1">
    <citation type="submission" date="2007-07" db="EMBL/GenBank/DDBJ databases">
        <title>Complete sequence of chromosome of Xanthobacter autotrophicus Py2.</title>
        <authorList>
            <consortium name="US DOE Joint Genome Institute"/>
            <person name="Copeland A."/>
            <person name="Lucas S."/>
            <person name="Lapidus A."/>
            <person name="Barry K."/>
            <person name="Glavina del Rio T."/>
            <person name="Hammon N."/>
            <person name="Israni S."/>
            <person name="Dalin E."/>
            <person name="Tice H."/>
            <person name="Pitluck S."/>
            <person name="Sims D."/>
            <person name="Brettin T."/>
            <person name="Bruce D."/>
            <person name="Detter J.C."/>
            <person name="Han C."/>
            <person name="Tapia R."/>
            <person name="Brainard J."/>
            <person name="Schmutz J."/>
            <person name="Larimer F."/>
            <person name="Land M."/>
            <person name="Hauser L."/>
            <person name="Kyrpides N."/>
            <person name="Kim E."/>
            <person name="Ensigns S.A."/>
            <person name="Richardson P."/>
        </authorList>
    </citation>
    <scope>NUCLEOTIDE SEQUENCE [LARGE SCALE GENOMIC DNA]</scope>
    <source>
        <strain>ATCC BAA-1158 / Py2</strain>
    </source>
</reference>
<gene>
    <name evidence="1" type="primary">gatB</name>
    <name type="ordered locus">Xaut_3928</name>
</gene>
<dbReference type="EC" id="6.3.5.-" evidence="1"/>
<dbReference type="EMBL" id="CP000781">
    <property type="protein sequence ID" value="ABS69152.1"/>
    <property type="molecule type" value="Genomic_DNA"/>
</dbReference>
<dbReference type="SMR" id="A7IMA9"/>
<dbReference type="STRING" id="78245.Xaut_3928"/>
<dbReference type="KEGG" id="xau:Xaut_3928"/>
<dbReference type="eggNOG" id="COG0064">
    <property type="taxonomic scope" value="Bacteria"/>
</dbReference>
<dbReference type="HOGENOM" id="CLU_019240_0_0_5"/>
<dbReference type="OrthoDB" id="9804078at2"/>
<dbReference type="PhylomeDB" id="A7IMA9"/>
<dbReference type="Proteomes" id="UP000002417">
    <property type="component" value="Chromosome"/>
</dbReference>
<dbReference type="GO" id="GO:0050566">
    <property type="term" value="F:asparaginyl-tRNA synthase (glutamine-hydrolyzing) activity"/>
    <property type="evidence" value="ECO:0007669"/>
    <property type="project" value="RHEA"/>
</dbReference>
<dbReference type="GO" id="GO:0005524">
    <property type="term" value="F:ATP binding"/>
    <property type="evidence" value="ECO:0007669"/>
    <property type="project" value="UniProtKB-KW"/>
</dbReference>
<dbReference type="GO" id="GO:0050567">
    <property type="term" value="F:glutaminyl-tRNA synthase (glutamine-hydrolyzing) activity"/>
    <property type="evidence" value="ECO:0007669"/>
    <property type="project" value="UniProtKB-UniRule"/>
</dbReference>
<dbReference type="GO" id="GO:0070681">
    <property type="term" value="P:glutaminyl-tRNAGln biosynthesis via transamidation"/>
    <property type="evidence" value="ECO:0007669"/>
    <property type="project" value="TreeGrafter"/>
</dbReference>
<dbReference type="GO" id="GO:0006412">
    <property type="term" value="P:translation"/>
    <property type="evidence" value="ECO:0007669"/>
    <property type="project" value="UniProtKB-UniRule"/>
</dbReference>
<dbReference type="FunFam" id="1.10.10.410:FF:000001">
    <property type="entry name" value="Aspartyl/glutamyl-tRNA(Asn/Gln) amidotransferase subunit B"/>
    <property type="match status" value="1"/>
</dbReference>
<dbReference type="FunFam" id="1.10.150.380:FF:000001">
    <property type="entry name" value="Aspartyl/glutamyl-tRNA(Asn/Gln) amidotransferase subunit B"/>
    <property type="match status" value="1"/>
</dbReference>
<dbReference type="Gene3D" id="1.10.10.410">
    <property type="match status" value="1"/>
</dbReference>
<dbReference type="Gene3D" id="1.10.150.380">
    <property type="entry name" value="GatB domain, N-terminal subdomain"/>
    <property type="match status" value="1"/>
</dbReference>
<dbReference type="HAMAP" id="MF_00121">
    <property type="entry name" value="GatB"/>
    <property type="match status" value="1"/>
</dbReference>
<dbReference type="InterPro" id="IPR017959">
    <property type="entry name" value="Asn/Gln-tRNA_amidoTrfase_suB/E"/>
</dbReference>
<dbReference type="InterPro" id="IPR006075">
    <property type="entry name" value="Asn/Gln-tRNA_Trfase_suB/E_cat"/>
</dbReference>
<dbReference type="InterPro" id="IPR018027">
    <property type="entry name" value="Asn/Gln_amidotransferase"/>
</dbReference>
<dbReference type="InterPro" id="IPR003789">
    <property type="entry name" value="Asn/Gln_tRNA_amidoTrase-B-like"/>
</dbReference>
<dbReference type="InterPro" id="IPR004413">
    <property type="entry name" value="GatB"/>
</dbReference>
<dbReference type="InterPro" id="IPR042114">
    <property type="entry name" value="GatB_C_1"/>
</dbReference>
<dbReference type="InterPro" id="IPR023168">
    <property type="entry name" value="GatB_Yqey_C_2"/>
</dbReference>
<dbReference type="InterPro" id="IPR017958">
    <property type="entry name" value="Gln-tRNA_amidoTrfase_suB_CS"/>
</dbReference>
<dbReference type="InterPro" id="IPR014746">
    <property type="entry name" value="Gln_synth/guanido_kin_cat_dom"/>
</dbReference>
<dbReference type="NCBIfam" id="TIGR00133">
    <property type="entry name" value="gatB"/>
    <property type="match status" value="1"/>
</dbReference>
<dbReference type="NCBIfam" id="NF004012">
    <property type="entry name" value="PRK05477.1-2"/>
    <property type="match status" value="1"/>
</dbReference>
<dbReference type="NCBIfam" id="NF004014">
    <property type="entry name" value="PRK05477.1-4"/>
    <property type="match status" value="1"/>
</dbReference>
<dbReference type="NCBIfam" id="NF004015">
    <property type="entry name" value="PRK05477.1-5"/>
    <property type="match status" value="1"/>
</dbReference>
<dbReference type="PANTHER" id="PTHR11659">
    <property type="entry name" value="GLUTAMYL-TRNA GLN AMIDOTRANSFERASE SUBUNIT B MITOCHONDRIAL AND PROKARYOTIC PET112-RELATED"/>
    <property type="match status" value="1"/>
</dbReference>
<dbReference type="PANTHER" id="PTHR11659:SF0">
    <property type="entry name" value="GLUTAMYL-TRNA(GLN) AMIDOTRANSFERASE SUBUNIT B, MITOCHONDRIAL"/>
    <property type="match status" value="1"/>
</dbReference>
<dbReference type="Pfam" id="PF02934">
    <property type="entry name" value="GatB_N"/>
    <property type="match status" value="1"/>
</dbReference>
<dbReference type="Pfam" id="PF02637">
    <property type="entry name" value="GatB_Yqey"/>
    <property type="match status" value="1"/>
</dbReference>
<dbReference type="SMART" id="SM00845">
    <property type="entry name" value="GatB_Yqey"/>
    <property type="match status" value="1"/>
</dbReference>
<dbReference type="SUPFAM" id="SSF89095">
    <property type="entry name" value="GatB/YqeY motif"/>
    <property type="match status" value="1"/>
</dbReference>
<dbReference type="SUPFAM" id="SSF55931">
    <property type="entry name" value="Glutamine synthetase/guanido kinase"/>
    <property type="match status" value="1"/>
</dbReference>
<dbReference type="PROSITE" id="PS01234">
    <property type="entry name" value="GATB"/>
    <property type="match status" value="1"/>
</dbReference>
<protein>
    <recommendedName>
        <fullName evidence="1">Aspartyl/glutamyl-tRNA(Asn/Gln) amidotransferase subunit B</fullName>
        <shortName evidence="1">Asp/Glu-ADT subunit B</shortName>
        <ecNumber evidence="1">6.3.5.-</ecNumber>
    </recommendedName>
</protein>
<name>GATB_XANP2</name>
<feature type="chain" id="PRO_1000095256" description="Aspartyl/glutamyl-tRNA(Asn/Gln) amidotransferase subunit B">
    <location>
        <begin position="1"/>
        <end position="496"/>
    </location>
</feature>
<sequence length="496" mass="54007">MTLHVRPTDTKKLISGATGDWEVVIGLEVHAQVASNAKLFSGASTAFGGPPNDHVSLVDAAMPGMLPVINQECVAQAVRTGLGLKAQIHLTSVFDRKNYFYPDLPQGYQISQYKQPVVGEGEVIVDLPDGESIPVGIERLHLEQDAGKSIHDLSPTQSFVDLNRSGVALMEIVSRPDLRSAEEAKAYVTKLRTILRYLGTCDGDMEKGNLRADVNVSVRRPGEPFGTRCEIKNVNSIRFIGQAIETEARRQIEILEDGGSISQETRLFDPTRGETRSMRSKEEAHDYRYFPDPDLLPLVLKPEWVEELKSGLPELPDEKKARFIADYGLSPYDAGVLVAERETAAYFEQVADGGGVKRDGKAAANFVINELFGRLNKEGKDVTSSPVTPHQIGAILDLIAEGTISSKIAKDLFEIIFTEGGDPRVVVEARGLKQVTDLGAIEKVVDEIIAKNPDKVAQVLAKPTMLGWFVGQAMKASGGKANPQALNDILKAKLGI</sequence>